<protein>
    <recommendedName>
        <fullName>Metallothionein</fullName>
        <shortName>MT</shortName>
    </recommendedName>
</protein>
<evidence type="ECO:0000250" key="1"/>
<evidence type="ECO:0000305" key="2"/>
<proteinExistence type="inferred from homology"/>
<organism>
    <name type="scientific">Thermostichus vulcanus</name>
    <name type="common">Synechococcus vulcanus</name>
    <dbReference type="NCBI Taxonomy" id="32053"/>
    <lineage>
        <taxon>Bacteria</taxon>
        <taxon>Bacillati</taxon>
        <taxon>Cyanobacteriota</taxon>
        <taxon>Cyanophyceae</taxon>
        <taxon>Thermostichales</taxon>
        <taxon>Thermostichaceae</taxon>
        <taxon>Thermostichus</taxon>
    </lineage>
</organism>
<name>MT_THEVL</name>
<comment type="function">
    <text>This protein complexes cadmium, zinc and copper.</text>
</comment>
<comment type="similarity">
    <text evidence="2">Belongs to the metallothionein superfamily. Type 14 family.</text>
</comment>
<accession>P30565</accession>
<gene>
    <name type="primary">mtnA</name>
</gene>
<reference key="1">
    <citation type="journal article" date="1992" name="Plant Mol. Biol.">
        <title>Nucleotide sequence of a metallothionein gene of the thermophilic cyanobacterium Synechococcus vulcanus.</title>
        <authorList>
            <person name="Shimizu T."/>
            <person name="Hiyama T."/>
            <person name="Ikeuchi M."/>
            <person name="Inoue Y."/>
        </authorList>
    </citation>
    <scope>NUCLEOTIDE SEQUENCE [GENOMIC DNA]</scope>
</reference>
<feature type="initiator methionine" description="Removed" evidence="1">
    <location>
        <position position="1"/>
    </location>
</feature>
<feature type="chain" id="PRO_0000197373" description="Metallothionein">
    <location>
        <begin position="2"/>
        <end position="57"/>
    </location>
</feature>
<keyword id="KW-0104">Cadmium</keyword>
<keyword id="KW-0186">Copper</keyword>
<keyword id="KW-0479">Metal-binding</keyword>
<keyword id="KW-0480">Metal-thiolate cluster</keyword>
<keyword id="KW-0862">Zinc</keyword>
<dbReference type="EMBL" id="X53839">
    <property type="protein sequence ID" value="CAA37832.1"/>
    <property type="molecule type" value="Genomic_DNA"/>
</dbReference>
<dbReference type="SMR" id="P30565"/>
<dbReference type="GO" id="GO:0046872">
    <property type="term" value="F:metal ion binding"/>
    <property type="evidence" value="ECO:0007669"/>
    <property type="project" value="UniProtKB-KW"/>
</dbReference>
<dbReference type="Gene3D" id="2.30.170.10">
    <property type="match status" value="1"/>
</dbReference>
<dbReference type="InterPro" id="IPR017854">
    <property type="entry name" value="Metalthion_dom_sf"/>
</dbReference>
<dbReference type="InterPro" id="IPR000518">
    <property type="entry name" value="Metalthion_fam14_prok"/>
</dbReference>
<dbReference type="Pfam" id="PF02069">
    <property type="entry name" value="Metallothio_Pro"/>
    <property type="match status" value="1"/>
</dbReference>
<dbReference type="PRINTS" id="PR00859">
    <property type="entry name" value="MTPROKARYOTE"/>
</dbReference>
<dbReference type="SUPFAM" id="SSF57868">
    <property type="entry name" value="Metallothionein"/>
    <property type="match status" value="1"/>
</dbReference>
<sequence length="57" mass="5775">MTTVTQMKCACPHCLCIVSLNDAIMVDGKPYCSEVCANGTCKENSGCGHAGCGCGSA</sequence>